<accession>Q8ZBK7</accession>
<accession>Q0WBP4</accession>
<organism>
    <name type="scientific">Yersinia pestis</name>
    <dbReference type="NCBI Taxonomy" id="632"/>
    <lineage>
        <taxon>Bacteria</taxon>
        <taxon>Pseudomonadati</taxon>
        <taxon>Pseudomonadota</taxon>
        <taxon>Gammaproteobacteria</taxon>
        <taxon>Enterobacterales</taxon>
        <taxon>Yersiniaceae</taxon>
        <taxon>Yersinia</taxon>
    </lineage>
</organism>
<protein>
    <recommendedName>
        <fullName evidence="1">Pantothenate synthetase</fullName>
        <shortName evidence="1">PS</shortName>
        <ecNumber evidence="1">6.3.2.1</ecNumber>
    </recommendedName>
    <alternativeName>
        <fullName evidence="1">Pantoate--beta-alanine ligase</fullName>
    </alternativeName>
    <alternativeName>
        <fullName evidence="1">Pantoate-activating enzyme</fullName>
    </alternativeName>
</protein>
<feature type="chain" id="PRO_0000128295" description="Pantothenate synthetase">
    <location>
        <begin position="1"/>
        <end position="284"/>
    </location>
</feature>
<feature type="active site" description="Proton donor" evidence="1">
    <location>
        <position position="37"/>
    </location>
</feature>
<feature type="binding site" evidence="1">
    <location>
        <begin position="30"/>
        <end position="37"/>
    </location>
    <ligand>
        <name>ATP</name>
        <dbReference type="ChEBI" id="CHEBI:30616"/>
    </ligand>
</feature>
<feature type="binding site" evidence="1">
    <location>
        <position position="61"/>
    </location>
    <ligand>
        <name>(R)-pantoate</name>
        <dbReference type="ChEBI" id="CHEBI:15980"/>
    </ligand>
</feature>
<feature type="binding site" evidence="1">
    <location>
        <position position="61"/>
    </location>
    <ligand>
        <name>beta-alanine</name>
        <dbReference type="ChEBI" id="CHEBI:57966"/>
    </ligand>
</feature>
<feature type="binding site" evidence="1">
    <location>
        <begin position="149"/>
        <end position="152"/>
    </location>
    <ligand>
        <name>ATP</name>
        <dbReference type="ChEBI" id="CHEBI:30616"/>
    </ligand>
</feature>
<feature type="binding site" evidence="1">
    <location>
        <position position="155"/>
    </location>
    <ligand>
        <name>(R)-pantoate</name>
        <dbReference type="ChEBI" id="CHEBI:15980"/>
    </ligand>
</feature>
<feature type="binding site" evidence="1">
    <location>
        <position position="178"/>
    </location>
    <ligand>
        <name>ATP</name>
        <dbReference type="ChEBI" id="CHEBI:30616"/>
    </ligand>
</feature>
<feature type="binding site" evidence="1">
    <location>
        <begin position="186"/>
        <end position="189"/>
    </location>
    <ligand>
        <name>ATP</name>
        <dbReference type="ChEBI" id="CHEBI:30616"/>
    </ligand>
</feature>
<feature type="strand" evidence="2">
    <location>
        <begin position="2"/>
        <end position="4"/>
    </location>
</feature>
<feature type="helix" evidence="2">
    <location>
        <begin position="7"/>
        <end position="19"/>
    </location>
</feature>
<feature type="strand" evidence="2">
    <location>
        <begin position="24"/>
        <end position="29"/>
    </location>
</feature>
<feature type="helix" evidence="2">
    <location>
        <begin position="35"/>
        <end position="45"/>
    </location>
</feature>
<feature type="strand" evidence="2">
    <location>
        <begin position="48"/>
        <end position="55"/>
    </location>
</feature>
<feature type="helix" evidence="2">
    <location>
        <begin position="59"/>
        <end position="61"/>
    </location>
</feature>
<feature type="helix" evidence="2">
    <location>
        <begin position="65"/>
        <end position="70"/>
    </location>
</feature>
<feature type="helix" evidence="2">
    <location>
        <begin position="75"/>
        <end position="84"/>
    </location>
</feature>
<feature type="strand" evidence="2">
    <location>
        <begin position="88"/>
        <end position="91"/>
    </location>
</feature>
<feature type="helix" evidence="2">
    <location>
        <begin position="95"/>
        <end position="98"/>
    </location>
</feature>
<feature type="strand" evidence="2">
    <location>
        <begin position="108"/>
        <end position="110"/>
    </location>
</feature>
<feature type="turn" evidence="2">
    <location>
        <begin position="112"/>
        <end position="114"/>
    </location>
</feature>
<feature type="strand" evidence="2">
    <location>
        <begin position="115"/>
        <end position="117"/>
    </location>
</feature>
<feature type="helix" evidence="2">
    <location>
        <begin position="119"/>
        <end position="122"/>
    </location>
</feature>
<feature type="helix" evidence="2">
    <location>
        <begin position="126"/>
        <end position="141"/>
    </location>
</feature>
<feature type="strand" evidence="2">
    <location>
        <begin position="144"/>
        <end position="149"/>
    </location>
</feature>
<feature type="helix" evidence="2">
    <location>
        <begin position="153"/>
        <end position="166"/>
    </location>
</feature>
<feature type="strand" evidence="2">
    <location>
        <begin position="171"/>
        <end position="175"/>
    </location>
</feature>
<feature type="helix" evidence="2">
    <location>
        <begin position="188"/>
        <end position="192"/>
    </location>
</feature>
<feature type="helix" evidence="2">
    <location>
        <begin position="195"/>
        <end position="200"/>
    </location>
</feature>
<feature type="helix" evidence="2">
    <location>
        <begin position="203"/>
        <end position="216"/>
    </location>
</feature>
<feature type="helix" evidence="2">
    <location>
        <begin position="222"/>
        <end position="236"/>
    </location>
</feature>
<feature type="strand" evidence="2">
    <location>
        <begin position="244"/>
        <end position="247"/>
    </location>
</feature>
<feature type="turn" evidence="2">
    <location>
        <begin position="248"/>
        <end position="250"/>
    </location>
</feature>
<feature type="strand" evidence="2">
    <location>
        <begin position="260"/>
        <end position="269"/>
    </location>
</feature>
<feature type="strand" evidence="2">
    <location>
        <begin position="272"/>
        <end position="281"/>
    </location>
</feature>
<reference key="1">
    <citation type="journal article" date="2001" name="Nature">
        <title>Genome sequence of Yersinia pestis, the causative agent of plague.</title>
        <authorList>
            <person name="Parkhill J."/>
            <person name="Wren B.W."/>
            <person name="Thomson N.R."/>
            <person name="Titball R.W."/>
            <person name="Holden M.T.G."/>
            <person name="Prentice M.B."/>
            <person name="Sebaihia M."/>
            <person name="James K.D."/>
            <person name="Churcher C.M."/>
            <person name="Mungall K.L."/>
            <person name="Baker S."/>
            <person name="Basham D."/>
            <person name="Bentley S.D."/>
            <person name="Brooks K."/>
            <person name="Cerdeno-Tarraga A.-M."/>
            <person name="Chillingworth T."/>
            <person name="Cronin A."/>
            <person name="Davies R.M."/>
            <person name="Davis P."/>
            <person name="Dougan G."/>
            <person name="Feltwell T."/>
            <person name="Hamlin N."/>
            <person name="Holroyd S."/>
            <person name="Jagels K."/>
            <person name="Karlyshev A.V."/>
            <person name="Leather S."/>
            <person name="Moule S."/>
            <person name="Oyston P.C.F."/>
            <person name="Quail M.A."/>
            <person name="Rutherford K.M."/>
            <person name="Simmonds M."/>
            <person name="Skelton J."/>
            <person name="Stevens K."/>
            <person name="Whitehead S."/>
            <person name="Barrell B.G."/>
        </authorList>
    </citation>
    <scope>NUCLEOTIDE SEQUENCE [LARGE SCALE GENOMIC DNA]</scope>
    <source>
        <strain>CO-92 / Biovar Orientalis</strain>
    </source>
</reference>
<reference key="2">
    <citation type="journal article" date="2002" name="J. Bacteriol.">
        <title>Genome sequence of Yersinia pestis KIM.</title>
        <authorList>
            <person name="Deng W."/>
            <person name="Burland V."/>
            <person name="Plunkett G. III"/>
            <person name="Boutin A."/>
            <person name="Mayhew G.F."/>
            <person name="Liss P."/>
            <person name="Perna N.T."/>
            <person name="Rose D.J."/>
            <person name="Mau B."/>
            <person name="Zhou S."/>
            <person name="Schwartz D.C."/>
            <person name="Fetherston J.D."/>
            <person name="Lindler L.E."/>
            <person name="Brubaker R.R."/>
            <person name="Plano G.V."/>
            <person name="Straley S.C."/>
            <person name="McDonough K.A."/>
            <person name="Nilles M.L."/>
            <person name="Matson J.S."/>
            <person name="Blattner F.R."/>
            <person name="Perry R.D."/>
        </authorList>
    </citation>
    <scope>NUCLEOTIDE SEQUENCE [LARGE SCALE GENOMIC DNA]</scope>
    <source>
        <strain>KIM10+ / Biovar Mediaevalis</strain>
    </source>
</reference>
<reference key="3">
    <citation type="journal article" date="2004" name="DNA Res.">
        <title>Complete genome sequence of Yersinia pestis strain 91001, an isolate avirulent to humans.</title>
        <authorList>
            <person name="Song Y."/>
            <person name="Tong Z."/>
            <person name="Wang J."/>
            <person name="Wang L."/>
            <person name="Guo Z."/>
            <person name="Han Y."/>
            <person name="Zhang J."/>
            <person name="Pei D."/>
            <person name="Zhou D."/>
            <person name="Qin H."/>
            <person name="Pang X."/>
            <person name="Han Y."/>
            <person name="Zhai J."/>
            <person name="Li M."/>
            <person name="Cui B."/>
            <person name="Qi Z."/>
            <person name="Jin L."/>
            <person name="Dai R."/>
            <person name="Chen F."/>
            <person name="Li S."/>
            <person name="Ye C."/>
            <person name="Du Z."/>
            <person name="Lin W."/>
            <person name="Wang J."/>
            <person name="Yu J."/>
            <person name="Yang H."/>
            <person name="Wang J."/>
            <person name="Huang P."/>
            <person name="Yang R."/>
        </authorList>
    </citation>
    <scope>NUCLEOTIDE SEQUENCE [LARGE SCALE GENOMIC DNA]</scope>
    <source>
        <strain>91001 / Biovar Mediaevalis</strain>
    </source>
</reference>
<keyword id="KW-0002">3D-structure</keyword>
<keyword id="KW-0067">ATP-binding</keyword>
<keyword id="KW-0963">Cytoplasm</keyword>
<keyword id="KW-0436">Ligase</keyword>
<keyword id="KW-0547">Nucleotide-binding</keyword>
<keyword id="KW-0566">Pantothenate biosynthesis</keyword>
<keyword id="KW-1185">Reference proteome</keyword>
<name>PANC_YERPE</name>
<sequence>MLIIETLPLLRQQIRRWRQEGKRIALVPTMGNLHEGHMTLVDEAKTRADVVVVTIFVNPLQFERPDDLAHYPRTLQEDCEKLTRHGADLVFAPAAADIYPAGLEKQTYVDVPALSTILEGASRPGHFRGVSTIVSKLFNLIQPDVACFGEKDYQQLALIRKMVADMGYDINIVGVPTVRAKDGLALSSRNGYLTEEERQIAPQLSKIMWALAEKMALGERQIDALLEEAAAQLLRVGFTPDELFIRDAETLQPLTVDSQQAVILMAAWLGKARLIDNQLVDLRH</sequence>
<gene>
    <name evidence="1" type="primary">panC</name>
    <name type="ordered locus">YPO3402</name>
    <name type="ordered locus">y0785</name>
    <name type="ordered locus">YP_0283</name>
</gene>
<evidence type="ECO:0000255" key="1">
    <source>
        <dbReference type="HAMAP-Rule" id="MF_00158"/>
    </source>
</evidence>
<evidence type="ECO:0007829" key="2">
    <source>
        <dbReference type="PDB" id="3Q12"/>
    </source>
</evidence>
<proteinExistence type="evidence at protein level"/>
<comment type="function">
    <text evidence="1">Catalyzes the condensation of pantoate with beta-alanine in an ATP-dependent reaction via a pantoyl-adenylate intermediate.</text>
</comment>
<comment type="catalytic activity">
    <reaction evidence="1">
        <text>(R)-pantoate + beta-alanine + ATP = (R)-pantothenate + AMP + diphosphate + H(+)</text>
        <dbReference type="Rhea" id="RHEA:10912"/>
        <dbReference type="ChEBI" id="CHEBI:15378"/>
        <dbReference type="ChEBI" id="CHEBI:15980"/>
        <dbReference type="ChEBI" id="CHEBI:29032"/>
        <dbReference type="ChEBI" id="CHEBI:30616"/>
        <dbReference type="ChEBI" id="CHEBI:33019"/>
        <dbReference type="ChEBI" id="CHEBI:57966"/>
        <dbReference type="ChEBI" id="CHEBI:456215"/>
        <dbReference type="EC" id="6.3.2.1"/>
    </reaction>
</comment>
<comment type="pathway">
    <text evidence="1">Cofactor biosynthesis; (R)-pantothenate biosynthesis; (R)-pantothenate from (R)-pantoate and beta-alanine: step 1/1.</text>
</comment>
<comment type="subunit">
    <text evidence="1">Homodimer.</text>
</comment>
<comment type="subcellular location">
    <subcellularLocation>
        <location evidence="1">Cytoplasm</location>
    </subcellularLocation>
</comment>
<comment type="miscellaneous">
    <text evidence="1">The reaction proceeds by a bi uni uni bi ping pong mechanism.</text>
</comment>
<comment type="similarity">
    <text evidence="1">Belongs to the pantothenate synthetase family.</text>
</comment>
<dbReference type="EC" id="6.3.2.1" evidence="1"/>
<dbReference type="EMBL" id="AL590842">
    <property type="protein sequence ID" value="CAL21991.1"/>
    <property type="molecule type" value="Genomic_DNA"/>
</dbReference>
<dbReference type="EMBL" id="AE009952">
    <property type="protein sequence ID" value="AAM84372.1"/>
    <property type="molecule type" value="Genomic_DNA"/>
</dbReference>
<dbReference type="EMBL" id="AE017042">
    <property type="protein sequence ID" value="AAS60558.1"/>
    <property type="molecule type" value="Genomic_DNA"/>
</dbReference>
<dbReference type="PIR" id="AD0413">
    <property type="entry name" value="AD0413"/>
</dbReference>
<dbReference type="RefSeq" id="WP_002209348.1">
    <property type="nucleotide sequence ID" value="NZ_WUCM01000008.1"/>
</dbReference>
<dbReference type="RefSeq" id="YP_002348294.1">
    <property type="nucleotide sequence ID" value="NC_003143.1"/>
</dbReference>
<dbReference type="PDB" id="3Q10">
    <property type="method" value="X-ray"/>
    <property type="resolution" value="1.83 A"/>
    <property type="chains" value="A/B/C/D=1-284"/>
</dbReference>
<dbReference type="PDB" id="3Q12">
    <property type="method" value="X-ray"/>
    <property type="resolution" value="1.58 A"/>
    <property type="chains" value="A/B/C/D=1-284"/>
</dbReference>
<dbReference type="PDBsum" id="3Q10"/>
<dbReference type="PDBsum" id="3Q12"/>
<dbReference type="SMR" id="Q8ZBK7"/>
<dbReference type="STRING" id="214092.YPO3402"/>
<dbReference type="PaxDb" id="214092-YPO3402"/>
<dbReference type="DNASU" id="1145732"/>
<dbReference type="EnsemblBacteria" id="AAS60558">
    <property type="protein sequence ID" value="AAS60558"/>
    <property type="gene ID" value="YP_0283"/>
</dbReference>
<dbReference type="GeneID" id="57975307"/>
<dbReference type="KEGG" id="ype:YPO3402"/>
<dbReference type="KEGG" id="ypk:y0785"/>
<dbReference type="KEGG" id="ypm:YP_0283"/>
<dbReference type="PATRIC" id="fig|214092.21.peg.3887"/>
<dbReference type="eggNOG" id="COG0414">
    <property type="taxonomic scope" value="Bacteria"/>
</dbReference>
<dbReference type="HOGENOM" id="CLU_047148_0_0_6"/>
<dbReference type="OMA" id="CNHKLEP"/>
<dbReference type="OrthoDB" id="9773087at2"/>
<dbReference type="UniPathway" id="UPA00028">
    <property type="reaction ID" value="UER00005"/>
</dbReference>
<dbReference type="EvolutionaryTrace" id="Q8ZBK7"/>
<dbReference type="Proteomes" id="UP000000815">
    <property type="component" value="Chromosome"/>
</dbReference>
<dbReference type="Proteomes" id="UP000001019">
    <property type="component" value="Chromosome"/>
</dbReference>
<dbReference type="Proteomes" id="UP000002490">
    <property type="component" value="Chromosome"/>
</dbReference>
<dbReference type="GO" id="GO:0005829">
    <property type="term" value="C:cytosol"/>
    <property type="evidence" value="ECO:0000318"/>
    <property type="project" value="GO_Central"/>
</dbReference>
<dbReference type="GO" id="GO:0005524">
    <property type="term" value="F:ATP binding"/>
    <property type="evidence" value="ECO:0007669"/>
    <property type="project" value="UniProtKB-KW"/>
</dbReference>
<dbReference type="GO" id="GO:0004592">
    <property type="term" value="F:pantoate-beta-alanine ligase activity"/>
    <property type="evidence" value="ECO:0000318"/>
    <property type="project" value="GO_Central"/>
</dbReference>
<dbReference type="GO" id="GO:0015940">
    <property type="term" value="P:pantothenate biosynthetic process"/>
    <property type="evidence" value="ECO:0000318"/>
    <property type="project" value="GO_Central"/>
</dbReference>
<dbReference type="CDD" id="cd00560">
    <property type="entry name" value="PanC"/>
    <property type="match status" value="1"/>
</dbReference>
<dbReference type="FunFam" id="3.30.1300.10:FF:000001">
    <property type="entry name" value="Pantothenate synthetase"/>
    <property type="match status" value="1"/>
</dbReference>
<dbReference type="FunFam" id="3.40.50.620:FF:000013">
    <property type="entry name" value="Pantothenate synthetase"/>
    <property type="match status" value="1"/>
</dbReference>
<dbReference type="Gene3D" id="3.40.50.620">
    <property type="entry name" value="HUPs"/>
    <property type="match status" value="1"/>
</dbReference>
<dbReference type="Gene3D" id="3.30.1300.10">
    <property type="entry name" value="Pantoate-beta-alanine ligase, C-terminal domain"/>
    <property type="match status" value="1"/>
</dbReference>
<dbReference type="HAMAP" id="MF_00158">
    <property type="entry name" value="PanC"/>
    <property type="match status" value="1"/>
</dbReference>
<dbReference type="InterPro" id="IPR003721">
    <property type="entry name" value="Pantoate_ligase"/>
</dbReference>
<dbReference type="InterPro" id="IPR042176">
    <property type="entry name" value="Pantoate_ligase_C"/>
</dbReference>
<dbReference type="InterPro" id="IPR014729">
    <property type="entry name" value="Rossmann-like_a/b/a_fold"/>
</dbReference>
<dbReference type="NCBIfam" id="TIGR00018">
    <property type="entry name" value="panC"/>
    <property type="match status" value="1"/>
</dbReference>
<dbReference type="PANTHER" id="PTHR21299">
    <property type="entry name" value="CYTIDYLATE KINASE/PANTOATE-BETA-ALANINE LIGASE"/>
    <property type="match status" value="1"/>
</dbReference>
<dbReference type="PANTHER" id="PTHR21299:SF1">
    <property type="entry name" value="PANTOATE--BETA-ALANINE LIGASE"/>
    <property type="match status" value="1"/>
</dbReference>
<dbReference type="Pfam" id="PF02569">
    <property type="entry name" value="Pantoate_ligase"/>
    <property type="match status" value="1"/>
</dbReference>
<dbReference type="SUPFAM" id="SSF52374">
    <property type="entry name" value="Nucleotidylyl transferase"/>
    <property type="match status" value="1"/>
</dbReference>